<protein>
    <recommendedName>
        <fullName>UDP-N-acetylglucosamine diphosphorylase 2</fullName>
        <ecNumber>2.7.7.23</ecNumber>
    </recommendedName>
    <alternativeName>
        <fullName>N-acetylglucosamine-1-phosphate uridylyltransferase 2</fullName>
    </alternativeName>
    <alternativeName>
        <fullName>UDP-N-acetylgalactosamine diphosphorylase 2</fullName>
        <ecNumber>2.7.7.83</ecNumber>
    </alternativeName>
    <alternativeName>
        <fullName>UTP--glucose-1-phosphate uridylyltransferase 2</fullName>
        <ecNumber>2.7.7.9</ecNumber>
    </alternativeName>
</protein>
<sequence>MKEPTTEIEIETSAVATILPPPLPPTASPHQALVERLKDYGQEDVFSLWDELSPEERDLLLRDIENLDLPRIDRIIRCSLHSQGLPVAAIEPVPENCVSTVEERTKEDREKWWKMGLKAIYEGKLGVVLLSGGQGTRLGSSDPKGCYNIGLPSGKSLFQIQAERILCVQRLASQAMSEASPTRPVTIQWYIMTSPFTHEPTQKFFKSHKYFGLEPDQVTFFQQGTLPCISKDGKFIMETPFSLSKAPDGNGGVYTALKSSRLLEDMASRGIKYVDCYGVDNVLVRVADPTFLGYFIDKSAASAAKVVRKAYPQEKVGVFVRRGKGGPLTVVEYTELDQSMASATNQQTGRLQYCWSNVCLHMFTLDFLNQVANGLEKDSVYHLAEKKIPSINGDIVGLKLEQFIFDCFPYAPSTALFEVLREEEFAPVKNANGSNYDTPESARLLVLRLHTRWVIAAGGFLTHSVPLYATGVEVSPLCSYAGENLEAICRGRTFHAPCEISL</sequence>
<comment type="function">
    <text evidence="2 3">Uridylyltransferase involved in the biosynthesis of UDP-glucosamine, an essential precursor for glycoprotein and glycolipid synthesis. Can use UDP-glucosamine, the 4-epimer UDP-galactosamine and UDP-glucose as substrates (PubMed:20557289). Acts redundantly with GLCNAC1PUT1. Required for gametogenesis and embryo development (PubMed:25231969).</text>
</comment>
<comment type="catalytic activity">
    <reaction evidence="2">
        <text>N-acetyl-alpha-D-glucosamine 1-phosphate + UTP + H(+) = UDP-N-acetyl-alpha-D-glucosamine + diphosphate</text>
        <dbReference type="Rhea" id="RHEA:13509"/>
        <dbReference type="ChEBI" id="CHEBI:15378"/>
        <dbReference type="ChEBI" id="CHEBI:33019"/>
        <dbReference type="ChEBI" id="CHEBI:46398"/>
        <dbReference type="ChEBI" id="CHEBI:57705"/>
        <dbReference type="ChEBI" id="CHEBI:57776"/>
        <dbReference type="EC" id="2.7.7.23"/>
    </reaction>
</comment>
<comment type="catalytic activity">
    <reaction evidence="2">
        <text>N-acetyl-alpha-D-galactosamine 1-phosphate + UTP + H(+) = UDP-N-acetyl-alpha-D-galactosamine + diphosphate</text>
        <dbReference type="Rhea" id="RHEA:34363"/>
        <dbReference type="ChEBI" id="CHEBI:15378"/>
        <dbReference type="ChEBI" id="CHEBI:33019"/>
        <dbReference type="ChEBI" id="CHEBI:46398"/>
        <dbReference type="ChEBI" id="CHEBI:61970"/>
        <dbReference type="ChEBI" id="CHEBI:67138"/>
        <dbReference type="EC" id="2.7.7.83"/>
    </reaction>
</comment>
<comment type="catalytic activity">
    <reaction evidence="2">
        <text>alpha-D-glucose 1-phosphate + UTP + H(+) = UDP-alpha-D-glucose + diphosphate</text>
        <dbReference type="Rhea" id="RHEA:19889"/>
        <dbReference type="ChEBI" id="CHEBI:15378"/>
        <dbReference type="ChEBI" id="CHEBI:33019"/>
        <dbReference type="ChEBI" id="CHEBI:46398"/>
        <dbReference type="ChEBI" id="CHEBI:58601"/>
        <dbReference type="ChEBI" id="CHEBI:58885"/>
        <dbReference type="EC" id="2.7.7.9"/>
    </reaction>
</comment>
<comment type="cofactor">
    <cofactor evidence="2">
        <name>Mg(2+)</name>
        <dbReference type="ChEBI" id="CHEBI:18420"/>
    </cofactor>
    <cofactor evidence="2">
        <name>Mn(2+)</name>
        <dbReference type="ChEBI" id="CHEBI:29035"/>
    </cofactor>
</comment>
<comment type="biophysicochemical properties">
    <kinetics>
        <KM evidence="2">180 uM for GlcNAc-1-P</KM>
        <KM evidence="2">203 uM for UTP</KM>
        <KM evidence="2">65 uM for UDP-GlcNAc</KM>
        <KM evidence="2">808 uM for UDP-GalNAc</KM>
    </kinetics>
</comment>
<comment type="pathway">
    <text>Nucleotide-sugar biosynthesis; UDP-N-acetyl-alpha-D-glucosamine biosynthesis; UDP-N-acetyl-alpha-D-glucosamine from N-acetyl-alpha-D-glucosamine 1-phosphate: step 1/1.</text>
</comment>
<comment type="subunit">
    <text evidence="1">Monomer.</text>
</comment>
<comment type="subcellular location">
    <subcellularLocation>
        <location evidence="1">Cytoplasm</location>
    </subcellularLocation>
</comment>
<comment type="tissue specificity">
    <text evidence="3">Expressed in root tips, stipules, lateral root primordia, immature anthers and at the branching points of the flowering shoots.</text>
</comment>
<comment type="disruption phenotype">
    <text evidence="3">No visible phenotype under normal growth conditions, but the double mutants glcnac1put1 and glcnac1put2 are lethal.</text>
</comment>
<comment type="similarity">
    <text evidence="4">Belongs to the UDPGP type 1 family.</text>
</comment>
<proteinExistence type="evidence at protein level"/>
<keyword id="KW-0963">Cytoplasm</keyword>
<keyword id="KW-0548">Nucleotidyltransferase</keyword>
<keyword id="KW-1185">Reference proteome</keyword>
<keyword id="KW-0808">Transferase</keyword>
<gene>
    <name type="primary">GLCNAC1PUT2</name>
    <name type="synonym">ATUAP1</name>
    <name type="ordered locus">At2g35020</name>
    <name type="ORF">F19I3.25</name>
</gene>
<reference key="1">
    <citation type="journal article" date="2010" name="Biochem. J.">
        <title>Identification and characterization of a strict and a promiscuous N-acetylglucosamine-1-P uridylyltransferase in Arabidopsis.</title>
        <authorList>
            <person name="Yang T."/>
            <person name="Echols M."/>
            <person name="Martin A."/>
            <person name="Bar-Peled M."/>
        </authorList>
    </citation>
    <scope>NUCLEOTIDE SEQUENCE [MRNA]</scope>
    <scope>FUNCTION</scope>
    <scope>CATALYTIC ACTIVITY</scope>
    <scope>SUBSTRATE SPECIFICITY</scope>
    <scope>COFACTOR</scope>
    <scope>BIOPHYSICOCHEMICAL PROPERTIES</scope>
    <scope>3D-STRUCTURE MODELING</scope>
</reference>
<reference key="2">
    <citation type="journal article" date="1999" name="Nature">
        <title>Sequence and analysis of chromosome 2 of the plant Arabidopsis thaliana.</title>
        <authorList>
            <person name="Lin X."/>
            <person name="Kaul S."/>
            <person name="Rounsley S.D."/>
            <person name="Shea T.P."/>
            <person name="Benito M.-I."/>
            <person name="Town C.D."/>
            <person name="Fujii C.Y."/>
            <person name="Mason T.M."/>
            <person name="Bowman C.L."/>
            <person name="Barnstead M.E."/>
            <person name="Feldblyum T.V."/>
            <person name="Buell C.R."/>
            <person name="Ketchum K.A."/>
            <person name="Lee J.J."/>
            <person name="Ronning C.M."/>
            <person name="Koo H.L."/>
            <person name="Moffat K.S."/>
            <person name="Cronin L.A."/>
            <person name="Shen M."/>
            <person name="Pai G."/>
            <person name="Van Aken S."/>
            <person name="Umayam L."/>
            <person name="Tallon L.J."/>
            <person name="Gill J.E."/>
            <person name="Adams M.D."/>
            <person name="Carrera A.J."/>
            <person name="Creasy T.H."/>
            <person name="Goodman H.M."/>
            <person name="Somerville C.R."/>
            <person name="Copenhaver G.P."/>
            <person name="Preuss D."/>
            <person name="Nierman W.C."/>
            <person name="White O."/>
            <person name="Eisen J.A."/>
            <person name="Salzberg S.L."/>
            <person name="Fraser C.M."/>
            <person name="Venter J.C."/>
        </authorList>
    </citation>
    <scope>NUCLEOTIDE SEQUENCE [LARGE SCALE GENOMIC DNA]</scope>
    <source>
        <strain>cv. Columbia</strain>
    </source>
</reference>
<reference key="3">
    <citation type="journal article" date="2017" name="Plant J.">
        <title>Araport11: a complete reannotation of the Arabidopsis thaliana reference genome.</title>
        <authorList>
            <person name="Cheng C.Y."/>
            <person name="Krishnakumar V."/>
            <person name="Chan A.P."/>
            <person name="Thibaud-Nissen F."/>
            <person name="Schobel S."/>
            <person name="Town C.D."/>
        </authorList>
    </citation>
    <scope>GENOME REANNOTATION</scope>
    <source>
        <strain>cv. Columbia</strain>
    </source>
</reference>
<reference key="4">
    <citation type="journal article" date="2003" name="Science">
        <title>Empirical analysis of transcriptional activity in the Arabidopsis genome.</title>
        <authorList>
            <person name="Yamada K."/>
            <person name="Lim J."/>
            <person name="Dale J.M."/>
            <person name="Chen H."/>
            <person name="Shinn P."/>
            <person name="Palm C.J."/>
            <person name="Southwick A.M."/>
            <person name="Wu H.C."/>
            <person name="Kim C.J."/>
            <person name="Nguyen M."/>
            <person name="Pham P.K."/>
            <person name="Cheuk R.F."/>
            <person name="Karlin-Newmann G."/>
            <person name="Liu S.X."/>
            <person name="Lam B."/>
            <person name="Sakano H."/>
            <person name="Wu T."/>
            <person name="Yu G."/>
            <person name="Miranda M."/>
            <person name="Quach H.L."/>
            <person name="Tripp M."/>
            <person name="Chang C.H."/>
            <person name="Lee J.M."/>
            <person name="Toriumi M.J."/>
            <person name="Chan M.M."/>
            <person name="Tang C.C."/>
            <person name="Onodera C.S."/>
            <person name="Deng J.M."/>
            <person name="Akiyama K."/>
            <person name="Ansari Y."/>
            <person name="Arakawa T."/>
            <person name="Banh J."/>
            <person name="Banno F."/>
            <person name="Bowser L."/>
            <person name="Brooks S.Y."/>
            <person name="Carninci P."/>
            <person name="Chao Q."/>
            <person name="Choy N."/>
            <person name="Enju A."/>
            <person name="Goldsmith A.D."/>
            <person name="Gurjal M."/>
            <person name="Hansen N.F."/>
            <person name="Hayashizaki Y."/>
            <person name="Johnson-Hopson C."/>
            <person name="Hsuan V.W."/>
            <person name="Iida K."/>
            <person name="Karnes M."/>
            <person name="Khan S."/>
            <person name="Koesema E."/>
            <person name="Ishida J."/>
            <person name="Jiang P.X."/>
            <person name="Jones T."/>
            <person name="Kawai J."/>
            <person name="Kamiya A."/>
            <person name="Meyers C."/>
            <person name="Nakajima M."/>
            <person name="Narusaka M."/>
            <person name="Seki M."/>
            <person name="Sakurai T."/>
            <person name="Satou M."/>
            <person name="Tamse R."/>
            <person name="Vaysberg M."/>
            <person name="Wallender E.K."/>
            <person name="Wong C."/>
            <person name="Yamamura Y."/>
            <person name="Yuan S."/>
            <person name="Shinozaki K."/>
            <person name="Davis R.W."/>
            <person name="Theologis A."/>
            <person name="Ecker J.R."/>
        </authorList>
    </citation>
    <scope>NUCLEOTIDE SEQUENCE [LARGE SCALE MRNA]</scope>
    <source>
        <strain>cv. Columbia</strain>
    </source>
</reference>
<reference key="5">
    <citation type="submission" date="2004-12" db="EMBL/GenBank/DDBJ databases">
        <title>Arabidopsis ORF clones.</title>
        <authorList>
            <person name="Cheuk R.F."/>
            <person name="Chen H."/>
            <person name="Kim C.J."/>
            <person name="Shinn P."/>
            <person name="Ecker J.R."/>
        </authorList>
    </citation>
    <scope>NUCLEOTIDE SEQUENCE [LARGE SCALE MRNA]</scope>
    <source>
        <strain>cv. Columbia</strain>
    </source>
</reference>
<reference key="6">
    <citation type="submission" date="2002-03" db="EMBL/GenBank/DDBJ databases">
        <title>Full-length cDNA from Arabidopsis thaliana.</title>
        <authorList>
            <person name="Brover V.V."/>
            <person name="Troukhan M.E."/>
            <person name="Alexandrov N.A."/>
            <person name="Lu Y.-P."/>
            <person name="Flavell R.B."/>
            <person name="Feldmann K.A."/>
        </authorList>
    </citation>
    <scope>NUCLEOTIDE SEQUENCE [LARGE SCALE MRNA]</scope>
</reference>
<reference key="7">
    <citation type="journal article" date="2007" name="Biosci. Biotechnol. Biochem.">
        <title>Properties and physiological functions of UDP-sugar pyrophosphorylase in Arabidopsis.</title>
        <authorList>
            <person name="Kotake T."/>
            <person name="Hojo S."/>
            <person name="Yamaguchi D."/>
            <person name="Aohara T."/>
            <person name="Konishi T."/>
            <person name="Tsumuraya Y."/>
        </authorList>
    </citation>
    <scope>IDENTIFICATION</scope>
</reference>
<reference key="8">
    <citation type="journal article" date="2014" name="Plant Cell Physiol.">
        <title>N-acetylglucosamine-1-P uridylyltransferase 1 and 2 are required for gametogenesis and embryo development in Arabidopsis thaliana.</title>
        <authorList>
            <person name="Chen Y.H."/>
            <person name="Shen H.L."/>
            <person name="Hsu P.J."/>
            <person name="Hwang S.G."/>
            <person name="Cheng W.H."/>
        </authorList>
    </citation>
    <scope>FUNCTION</scope>
    <scope>TISSUE SPECIFICITY</scope>
    <scope>DISRUPTION PHENOTYPE</scope>
</reference>
<name>UAP2_ARATH</name>
<evidence type="ECO:0000250" key="1"/>
<evidence type="ECO:0000269" key="2">
    <source>
    </source>
</evidence>
<evidence type="ECO:0000269" key="3">
    <source>
    </source>
</evidence>
<evidence type="ECO:0000305" key="4"/>
<organism>
    <name type="scientific">Arabidopsis thaliana</name>
    <name type="common">Mouse-ear cress</name>
    <dbReference type="NCBI Taxonomy" id="3702"/>
    <lineage>
        <taxon>Eukaryota</taxon>
        <taxon>Viridiplantae</taxon>
        <taxon>Streptophyta</taxon>
        <taxon>Embryophyta</taxon>
        <taxon>Tracheophyta</taxon>
        <taxon>Spermatophyta</taxon>
        <taxon>Magnoliopsida</taxon>
        <taxon>eudicotyledons</taxon>
        <taxon>Gunneridae</taxon>
        <taxon>Pentapetalae</taxon>
        <taxon>rosids</taxon>
        <taxon>malvids</taxon>
        <taxon>Brassicales</taxon>
        <taxon>Brassicaceae</taxon>
        <taxon>Camelineae</taxon>
        <taxon>Arabidopsis</taxon>
    </lineage>
</organism>
<feature type="chain" id="PRO_0000185770" description="UDP-N-acetylglucosamine diphosphorylase 2">
    <location>
        <begin position="1"/>
        <end position="502"/>
    </location>
</feature>
<feature type="short sequence motif" description="Substrate binding" evidence="1">
    <location>
        <begin position="130"/>
        <end position="133"/>
    </location>
</feature>
<feature type="short sequence motif" description="Substrate binding" evidence="1">
    <location>
        <begin position="332"/>
        <end position="333"/>
    </location>
</feature>
<feature type="binding site" evidence="1">
    <location>
        <position position="250"/>
    </location>
    <ligand>
        <name>substrate</name>
    </ligand>
</feature>
<feature type="binding site" evidence="1">
    <location>
        <position position="429"/>
    </location>
    <ligand>
        <name>substrate</name>
    </ligand>
</feature>
<feature type="sequence conflict" description="In Ref. 6; AAM65852." evidence="4" ref="6">
    <original>A</original>
    <variation>T</variation>
    <location>
        <position position="16"/>
    </location>
</feature>
<feature type="sequence conflict" description="In Ref. 6; AAM65852." evidence="4" ref="6">
    <original>K</original>
    <variation>E</variation>
    <location>
        <position position="206"/>
    </location>
</feature>
<feature type="sequence conflict" description="In Ref. 6; AAM65852." evidence="4" ref="6">
    <original>T</original>
    <variation>A</variation>
    <location>
        <position position="225"/>
    </location>
</feature>
<accession>O64765</accession>
<accession>Q5PNR7</accession>
<accession>Q8L9P4</accession>
<dbReference type="EC" id="2.7.7.23"/>
<dbReference type="EC" id="2.7.7.83"/>
<dbReference type="EC" id="2.7.7.9"/>
<dbReference type="EMBL" id="GU937394">
    <property type="protein sequence ID" value="ADF80195.1"/>
    <property type="molecule type" value="mRNA"/>
</dbReference>
<dbReference type="EMBL" id="AC004238">
    <property type="protein sequence ID" value="AAC12841.1"/>
    <property type="molecule type" value="Genomic_DNA"/>
</dbReference>
<dbReference type="EMBL" id="CP002685">
    <property type="protein sequence ID" value="AEC09050.1"/>
    <property type="molecule type" value="Genomic_DNA"/>
</dbReference>
<dbReference type="EMBL" id="AF462794">
    <property type="protein sequence ID" value="AAL58890.1"/>
    <property type="molecule type" value="mRNA"/>
</dbReference>
<dbReference type="EMBL" id="BT020380">
    <property type="protein sequence ID" value="AAV85735.1"/>
    <property type="molecule type" value="mRNA"/>
</dbReference>
<dbReference type="EMBL" id="AY088313">
    <property type="protein sequence ID" value="AAM65852.1"/>
    <property type="molecule type" value="mRNA"/>
</dbReference>
<dbReference type="PIR" id="T00483">
    <property type="entry name" value="T00483"/>
</dbReference>
<dbReference type="RefSeq" id="NP_181047.1">
    <property type="nucleotide sequence ID" value="NM_129054.4"/>
</dbReference>
<dbReference type="SMR" id="O64765"/>
<dbReference type="FunCoup" id="O64765">
    <property type="interactions" value="3156"/>
</dbReference>
<dbReference type="STRING" id="3702.O64765"/>
<dbReference type="iPTMnet" id="O64765"/>
<dbReference type="PaxDb" id="3702-AT2G35020.1"/>
<dbReference type="ProteomicsDB" id="228623"/>
<dbReference type="EnsemblPlants" id="AT2G35020.1">
    <property type="protein sequence ID" value="AT2G35020.1"/>
    <property type="gene ID" value="AT2G35020"/>
</dbReference>
<dbReference type="GeneID" id="818066"/>
<dbReference type="Gramene" id="AT2G35020.1">
    <property type="protein sequence ID" value="AT2G35020.1"/>
    <property type="gene ID" value="AT2G35020"/>
</dbReference>
<dbReference type="KEGG" id="ath:AT2G35020"/>
<dbReference type="Araport" id="AT2G35020"/>
<dbReference type="TAIR" id="AT2G35020">
    <property type="gene designation" value="GLCNAC1PUT2"/>
</dbReference>
<dbReference type="eggNOG" id="KOG2388">
    <property type="taxonomic scope" value="Eukaryota"/>
</dbReference>
<dbReference type="HOGENOM" id="CLU_025603_1_1_1"/>
<dbReference type="InParanoid" id="O64765"/>
<dbReference type="OMA" id="THCTVPW"/>
<dbReference type="PhylomeDB" id="O64765"/>
<dbReference type="BioCyc" id="ARA:AT2G35020-MONOMER"/>
<dbReference type="BioCyc" id="MetaCyc:AT2G35020-MONOMER"/>
<dbReference type="BRENDA" id="2.7.7.23">
    <property type="organism ID" value="399"/>
</dbReference>
<dbReference type="SABIO-RK" id="O64765"/>
<dbReference type="UniPathway" id="UPA00113">
    <property type="reaction ID" value="UER00533"/>
</dbReference>
<dbReference type="PRO" id="PR:O64765"/>
<dbReference type="Proteomes" id="UP000006548">
    <property type="component" value="Chromosome 2"/>
</dbReference>
<dbReference type="ExpressionAtlas" id="O64765">
    <property type="expression patterns" value="baseline and differential"/>
</dbReference>
<dbReference type="GO" id="GO:0005737">
    <property type="term" value="C:cytoplasm"/>
    <property type="evidence" value="ECO:0007669"/>
    <property type="project" value="UniProtKB-SubCell"/>
</dbReference>
<dbReference type="GO" id="GO:0052630">
    <property type="term" value="F:UDP-N-acetylgalactosamine diphosphorylase activity"/>
    <property type="evidence" value="ECO:0000314"/>
    <property type="project" value="TAIR"/>
</dbReference>
<dbReference type="GO" id="GO:0003977">
    <property type="term" value="F:UDP-N-acetylglucosamine diphosphorylase activity"/>
    <property type="evidence" value="ECO:0000314"/>
    <property type="project" value="TAIR"/>
</dbReference>
<dbReference type="GO" id="GO:0003983">
    <property type="term" value="F:UTP:glucose-1-phosphate uridylyltransferase activity"/>
    <property type="evidence" value="ECO:0000314"/>
    <property type="project" value="TAIR"/>
</dbReference>
<dbReference type="GO" id="GO:0009793">
    <property type="term" value="P:embryo development ending in seed dormancy"/>
    <property type="evidence" value="ECO:0000315"/>
    <property type="project" value="UniProtKB"/>
</dbReference>
<dbReference type="GO" id="GO:0009553">
    <property type="term" value="P:embryo sac development"/>
    <property type="evidence" value="ECO:0000315"/>
    <property type="project" value="UniProtKB"/>
</dbReference>
<dbReference type="GO" id="GO:0009555">
    <property type="term" value="P:pollen development"/>
    <property type="evidence" value="ECO:0000315"/>
    <property type="project" value="UniProtKB"/>
</dbReference>
<dbReference type="GO" id="GO:0006011">
    <property type="term" value="P:UDP-alpha-D-glucose metabolic process"/>
    <property type="evidence" value="ECO:0000314"/>
    <property type="project" value="TAIR"/>
</dbReference>
<dbReference type="GO" id="GO:0019276">
    <property type="term" value="P:UDP-N-acetylgalactosamine metabolic process"/>
    <property type="evidence" value="ECO:0000314"/>
    <property type="project" value="TAIR"/>
</dbReference>
<dbReference type="GO" id="GO:0006048">
    <property type="term" value="P:UDP-N-acetylglucosamine biosynthetic process"/>
    <property type="evidence" value="ECO:0007669"/>
    <property type="project" value="UniProtKB-UniPathway"/>
</dbReference>
<dbReference type="GO" id="GO:0006047">
    <property type="term" value="P:UDP-N-acetylglucosamine metabolic process"/>
    <property type="evidence" value="ECO:0000314"/>
    <property type="project" value="TAIR"/>
</dbReference>
<dbReference type="CDD" id="cd04193">
    <property type="entry name" value="UDPGlcNAc_PPase"/>
    <property type="match status" value="1"/>
</dbReference>
<dbReference type="FunFam" id="3.90.550.10:FF:000072">
    <property type="entry name" value="UDP-N-acetylglucosamine diphosphorylase 2"/>
    <property type="match status" value="1"/>
</dbReference>
<dbReference type="Gene3D" id="3.90.550.10">
    <property type="entry name" value="Spore Coat Polysaccharide Biosynthesis Protein SpsA, Chain A"/>
    <property type="match status" value="1"/>
</dbReference>
<dbReference type="InterPro" id="IPR029044">
    <property type="entry name" value="Nucleotide-diphossugar_trans"/>
</dbReference>
<dbReference type="InterPro" id="IPR039741">
    <property type="entry name" value="UDP-sugar_pyrophosphorylase"/>
</dbReference>
<dbReference type="InterPro" id="IPR002618">
    <property type="entry name" value="UDPGP_fam"/>
</dbReference>
<dbReference type="PANTHER" id="PTHR11952:SF2">
    <property type="entry name" value="LD24639P"/>
    <property type="match status" value="1"/>
</dbReference>
<dbReference type="PANTHER" id="PTHR11952">
    <property type="entry name" value="UDP- GLUCOSE PYROPHOSPHORYLASE"/>
    <property type="match status" value="1"/>
</dbReference>
<dbReference type="Pfam" id="PF01704">
    <property type="entry name" value="UDPGP"/>
    <property type="match status" value="1"/>
</dbReference>
<dbReference type="SUPFAM" id="SSF53448">
    <property type="entry name" value="Nucleotide-diphospho-sugar transferases"/>
    <property type="match status" value="1"/>
</dbReference>